<name>EMC2_BOVIN</name>
<sequence>MAKVSELYDVTWEEMRDKMRKWREENSRNSEQIVEVGEELISEYASKLGDDIWIIYEQVMIAALDYGRDDLALFCLQELRRQFPGSHRVKRLTGMRFEAMERYDDAIQLYDRILQEDPTNTAARKRKIAIRKAQGKNVEAIRELNEYLEQFVGDQEAWHELAELYINEHDYAKAAFCLEELMMTNPYNHLYCQQYAEVKYTQGGLENLELSRKYFAQALKLNNRNMRALFGLYMSASHIASNPKASAKTKKDNMKYASWAASQINKAYQFAGRSKKETKYSLKAVEDMLETLQITQS</sequence>
<organism>
    <name type="scientific">Bos taurus</name>
    <name type="common">Bovine</name>
    <dbReference type="NCBI Taxonomy" id="9913"/>
    <lineage>
        <taxon>Eukaryota</taxon>
        <taxon>Metazoa</taxon>
        <taxon>Chordata</taxon>
        <taxon>Craniata</taxon>
        <taxon>Vertebrata</taxon>
        <taxon>Euteleostomi</taxon>
        <taxon>Mammalia</taxon>
        <taxon>Eutheria</taxon>
        <taxon>Laurasiatheria</taxon>
        <taxon>Artiodactyla</taxon>
        <taxon>Ruminantia</taxon>
        <taxon>Pecora</taxon>
        <taxon>Bovidae</taxon>
        <taxon>Bovinae</taxon>
        <taxon>Bos</taxon>
    </lineage>
</organism>
<feature type="initiator methionine" description="Removed" evidence="1">
    <location>
        <position position="1"/>
    </location>
</feature>
<feature type="chain" id="PRO_0000247936" description="ER membrane protein complex subunit 2">
    <location>
        <begin position="2"/>
        <end position="297"/>
    </location>
</feature>
<feature type="repeat" description="TPR 1" evidence="3">
    <location>
        <begin position="87"/>
        <end position="120"/>
    </location>
</feature>
<feature type="repeat" description="TPR 2" evidence="3">
    <location>
        <begin position="155"/>
        <end position="188"/>
    </location>
</feature>
<feature type="repeat" description="TPR 3" evidence="3">
    <location>
        <begin position="192"/>
        <end position="225"/>
    </location>
</feature>
<feature type="modified residue" description="N-acetylalanine" evidence="1">
    <location>
        <position position="2"/>
    </location>
</feature>
<feature type="modified residue" description="N6-acetyllysine" evidence="1">
    <location>
        <position position="255"/>
    </location>
</feature>
<dbReference type="EMBL" id="BT021027">
    <property type="protein sequence ID" value="AAX09044.1"/>
    <property type="molecule type" value="mRNA"/>
</dbReference>
<dbReference type="EMBL" id="BC102870">
    <property type="protein sequence ID" value="AAI02871.1"/>
    <property type="molecule type" value="mRNA"/>
</dbReference>
<dbReference type="EMBL" id="BC142076">
    <property type="protein sequence ID" value="AAI42077.1"/>
    <property type="molecule type" value="mRNA"/>
</dbReference>
<dbReference type="RefSeq" id="NP_001073796.1">
    <property type="nucleotide sequence ID" value="NM_001080327.1"/>
</dbReference>
<dbReference type="RefSeq" id="XP_005215640.3">
    <property type="nucleotide sequence ID" value="XM_005215583.5"/>
</dbReference>
<dbReference type="SMR" id="Q5E993"/>
<dbReference type="FunCoup" id="Q5E993">
    <property type="interactions" value="2740"/>
</dbReference>
<dbReference type="STRING" id="9913.ENSBTAP00000013197"/>
<dbReference type="PaxDb" id="9913-ENSBTAP00000013197"/>
<dbReference type="GeneID" id="616813"/>
<dbReference type="KEGG" id="bta:616813"/>
<dbReference type="CTD" id="9694"/>
<dbReference type="VEuPathDB" id="HostDB:ENSBTAG00000010006"/>
<dbReference type="eggNOG" id="KOG3060">
    <property type="taxonomic scope" value="Eukaryota"/>
</dbReference>
<dbReference type="HOGENOM" id="CLU_052388_1_0_1"/>
<dbReference type="InParanoid" id="Q5E993"/>
<dbReference type="OMA" id="MSDQEGW"/>
<dbReference type="OrthoDB" id="124397at2759"/>
<dbReference type="TreeFam" id="TF312997"/>
<dbReference type="Proteomes" id="UP000009136">
    <property type="component" value="Chromosome 14"/>
</dbReference>
<dbReference type="Bgee" id="ENSBTAG00000010006">
    <property type="expression patterns" value="Expressed in adenohypophysis and 104 other cell types or tissues"/>
</dbReference>
<dbReference type="GO" id="GO:0005737">
    <property type="term" value="C:cytoplasm"/>
    <property type="evidence" value="ECO:0000250"/>
    <property type="project" value="UniProtKB"/>
</dbReference>
<dbReference type="GO" id="GO:0072546">
    <property type="term" value="C:EMC complex"/>
    <property type="evidence" value="ECO:0000250"/>
    <property type="project" value="UniProtKB"/>
</dbReference>
<dbReference type="GO" id="GO:0005783">
    <property type="term" value="C:endoplasmic reticulum"/>
    <property type="evidence" value="ECO:0000250"/>
    <property type="project" value="UniProtKB"/>
</dbReference>
<dbReference type="GO" id="GO:0005789">
    <property type="term" value="C:endoplasmic reticulum membrane"/>
    <property type="evidence" value="ECO:0000250"/>
    <property type="project" value="UniProtKB"/>
</dbReference>
<dbReference type="GO" id="GO:0042406">
    <property type="term" value="C:extrinsic component of endoplasmic reticulum membrane"/>
    <property type="evidence" value="ECO:0000250"/>
    <property type="project" value="UniProtKB"/>
</dbReference>
<dbReference type="GO" id="GO:0045050">
    <property type="term" value="P:protein insertion into ER membrane by stop-transfer membrane-anchor sequence"/>
    <property type="evidence" value="ECO:0000250"/>
    <property type="project" value="UniProtKB"/>
</dbReference>
<dbReference type="GO" id="GO:0071816">
    <property type="term" value="P:tail-anchored membrane protein insertion into ER membrane"/>
    <property type="evidence" value="ECO:0000250"/>
    <property type="project" value="UniProtKB"/>
</dbReference>
<dbReference type="FunFam" id="1.25.40.10:FF:000074">
    <property type="entry name" value="ER membrane protein complex subunit 2"/>
    <property type="match status" value="1"/>
</dbReference>
<dbReference type="Gene3D" id="1.25.40.10">
    <property type="entry name" value="Tetratricopeptide repeat domain"/>
    <property type="match status" value="1"/>
</dbReference>
<dbReference type="InterPro" id="IPR039856">
    <property type="entry name" value="EMC2-like"/>
</dbReference>
<dbReference type="InterPro" id="IPR011990">
    <property type="entry name" value="TPR-like_helical_dom_sf"/>
</dbReference>
<dbReference type="InterPro" id="IPR055217">
    <property type="entry name" value="TPR_EMC2"/>
</dbReference>
<dbReference type="InterPro" id="IPR019734">
    <property type="entry name" value="TPR_rpt"/>
</dbReference>
<dbReference type="PANTHER" id="PTHR12760">
    <property type="entry name" value="TETRATRICOPEPTIDE REPEAT PROTEIN"/>
    <property type="match status" value="1"/>
</dbReference>
<dbReference type="Pfam" id="PF22890">
    <property type="entry name" value="TPR_EMC2"/>
    <property type="match status" value="1"/>
</dbReference>
<dbReference type="SUPFAM" id="SSF48452">
    <property type="entry name" value="TPR-like"/>
    <property type="match status" value="1"/>
</dbReference>
<dbReference type="PROSITE" id="PS50005">
    <property type="entry name" value="TPR"/>
    <property type="match status" value="2"/>
</dbReference>
<dbReference type="PROSITE" id="PS50293">
    <property type="entry name" value="TPR_REGION"/>
    <property type="match status" value="1"/>
</dbReference>
<proteinExistence type="evidence at transcript level"/>
<reference key="1">
    <citation type="journal article" date="2005" name="BMC Genomics">
        <title>Characterization of 954 bovine full-CDS cDNA sequences.</title>
        <authorList>
            <person name="Harhay G.P."/>
            <person name="Sonstegard T.S."/>
            <person name="Keele J.W."/>
            <person name="Heaton M.P."/>
            <person name="Clawson M.L."/>
            <person name="Snelling W.M."/>
            <person name="Wiedmann R.T."/>
            <person name="Van Tassell C.P."/>
            <person name="Smith T.P.L."/>
        </authorList>
    </citation>
    <scope>NUCLEOTIDE SEQUENCE [LARGE SCALE MRNA]</scope>
</reference>
<reference key="2">
    <citation type="submission" date="2007-06" db="EMBL/GenBank/DDBJ databases">
        <authorList>
            <consortium name="NIH - Mammalian Gene Collection (MGC) project"/>
        </authorList>
    </citation>
    <scope>NUCLEOTIDE SEQUENCE [LARGE SCALE MRNA]</scope>
    <source>
        <strain>Crossbred X Angus</strain>
        <tissue>Ileum</tissue>
        <tissue>Liver</tissue>
    </source>
</reference>
<comment type="function">
    <text evidence="1">Part of the endoplasmic reticulum membrane protein complex (EMC) that enables the energy-independent insertion into endoplasmic reticulum membranes of newly synthesized membrane proteins. Preferentially accommodates proteins with transmembrane domains that are weakly hydrophobic or contain destabilizing features such as charged and aromatic residues. Involved in the cotranslational insertion of multi-pass membrane proteins in which stop-transfer membrane-anchor sequences become ER membrane spanning helices. It is also required for the post-translational insertion of tail-anchored/TA proteins in endoplasmic reticulum membranes. By mediating the proper cotranslational insertion of N-terminal transmembrane domains in an N-exo topology, with translocated N-terminus in the lumen of the ER, controls the topology of multi-pass membrane proteins like the G protein-coupled receptors. By regulating the insertion of various proteins in membranes, it is indirectly involved in many cellular processes.</text>
</comment>
<comment type="subunit">
    <text evidence="1">Component of the ER membrane protein complex (EMC).</text>
</comment>
<comment type="subcellular location">
    <subcellularLocation>
        <location evidence="1">Endoplasmic reticulum membrane</location>
        <topology evidence="1">Peripheral membrane protein</topology>
        <orientation evidence="1">Cytoplasmic side</orientation>
    </subcellularLocation>
    <text evidence="2">May also localize to the nuclear envelope.</text>
</comment>
<comment type="similarity">
    <text evidence="4">Belongs to the EMC2 family.</text>
</comment>
<keyword id="KW-0007">Acetylation</keyword>
<keyword id="KW-0256">Endoplasmic reticulum</keyword>
<keyword id="KW-0472">Membrane</keyword>
<keyword id="KW-1185">Reference proteome</keyword>
<keyword id="KW-0677">Repeat</keyword>
<keyword id="KW-0802">TPR repeat</keyword>
<gene>
    <name evidence="1" type="primary">EMC2</name>
    <name evidence="1" type="synonym">TTC35</name>
</gene>
<accession>Q5E993</accession>
<accession>A5PJE6</accession>
<protein>
    <recommendedName>
        <fullName evidence="4">ER membrane protein complex subunit 2</fullName>
    </recommendedName>
    <alternativeName>
        <fullName evidence="1">Tetratricopeptide repeat protein 35</fullName>
        <shortName evidence="1">TPR repeat protein 35</shortName>
    </alternativeName>
</protein>
<evidence type="ECO:0000250" key="1">
    <source>
        <dbReference type="UniProtKB" id="Q15006"/>
    </source>
</evidence>
<evidence type="ECO:0000250" key="2">
    <source>
        <dbReference type="UniProtKB" id="Q9CRD2"/>
    </source>
</evidence>
<evidence type="ECO:0000255" key="3"/>
<evidence type="ECO:0000305" key="4"/>